<comment type="function">
    <text evidence="1">One of the primary rRNA binding proteins, it binds directly to 16S rRNA where it nucleates assembly of the body of the 30S subunit.</text>
</comment>
<comment type="function">
    <text evidence="1">With S5 and S12 plays an important role in translational accuracy.</text>
</comment>
<comment type="subunit">
    <text evidence="1">Part of the 30S ribosomal subunit. Contacts protein S5. The interaction surface between S4 and S5 is involved in control of translational fidelity.</text>
</comment>
<comment type="similarity">
    <text evidence="1">Belongs to the universal ribosomal protein uS4 family.</text>
</comment>
<sequence>MARYIGPKCKLSRREGTDLFLKSGVTPFEKKCKSEQIPGVHGQRRQRLSDYGLQLREKQKVRRMYGVLEKQFRNYYKEAARLKGATGELLLQLLESRLDNVVYRMGFGSTRSEARQLVSHKAIAVNGRTVNVASYQVKPGDVVSVREKAKNQARIQNALGIAANRGDVAWIDVDSKKMEGTFKAVPERGDLSADINENLIVELYSK</sequence>
<dbReference type="EMBL" id="CP000285">
    <property type="protein sequence ID" value="ABE57807.1"/>
    <property type="molecule type" value="Genomic_DNA"/>
</dbReference>
<dbReference type="RefSeq" id="WP_011505753.1">
    <property type="nucleotide sequence ID" value="NC_007963.1"/>
</dbReference>
<dbReference type="SMR" id="Q1R0F1"/>
<dbReference type="STRING" id="290398.Csal_0445"/>
<dbReference type="GeneID" id="95333197"/>
<dbReference type="KEGG" id="csa:Csal_0445"/>
<dbReference type="eggNOG" id="COG0522">
    <property type="taxonomic scope" value="Bacteria"/>
</dbReference>
<dbReference type="HOGENOM" id="CLU_092403_0_2_6"/>
<dbReference type="OrthoDB" id="9803672at2"/>
<dbReference type="Proteomes" id="UP000000239">
    <property type="component" value="Chromosome"/>
</dbReference>
<dbReference type="GO" id="GO:0015935">
    <property type="term" value="C:small ribosomal subunit"/>
    <property type="evidence" value="ECO:0007669"/>
    <property type="project" value="InterPro"/>
</dbReference>
<dbReference type="GO" id="GO:0019843">
    <property type="term" value="F:rRNA binding"/>
    <property type="evidence" value="ECO:0007669"/>
    <property type="project" value="UniProtKB-UniRule"/>
</dbReference>
<dbReference type="GO" id="GO:0003735">
    <property type="term" value="F:structural constituent of ribosome"/>
    <property type="evidence" value="ECO:0007669"/>
    <property type="project" value="InterPro"/>
</dbReference>
<dbReference type="GO" id="GO:0042274">
    <property type="term" value="P:ribosomal small subunit biogenesis"/>
    <property type="evidence" value="ECO:0007669"/>
    <property type="project" value="TreeGrafter"/>
</dbReference>
<dbReference type="GO" id="GO:0006412">
    <property type="term" value="P:translation"/>
    <property type="evidence" value="ECO:0007669"/>
    <property type="project" value="UniProtKB-UniRule"/>
</dbReference>
<dbReference type="CDD" id="cd00165">
    <property type="entry name" value="S4"/>
    <property type="match status" value="1"/>
</dbReference>
<dbReference type="FunFam" id="1.10.1050.10:FF:000001">
    <property type="entry name" value="30S ribosomal protein S4"/>
    <property type="match status" value="1"/>
</dbReference>
<dbReference type="FunFam" id="3.10.290.10:FF:000001">
    <property type="entry name" value="30S ribosomal protein S4"/>
    <property type="match status" value="1"/>
</dbReference>
<dbReference type="Gene3D" id="1.10.1050.10">
    <property type="entry name" value="Ribosomal Protein S4 Delta 41, Chain A, domain 1"/>
    <property type="match status" value="1"/>
</dbReference>
<dbReference type="Gene3D" id="3.10.290.10">
    <property type="entry name" value="RNA-binding S4 domain"/>
    <property type="match status" value="1"/>
</dbReference>
<dbReference type="HAMAP" id="MF_01306_B">
    <property type="entry name" value="Ribosomal_uS4_B"/>
    <property type="match status" value="1"/>
</dbReference>
<dbReference type="InterPro" id="IPR022801">
    <property type="entry name" value="Ribosomal_uS4"/>
</dbReference>
<dbReference type="InterPro" id="IPR005709">
    <property type="entry name" value="Ribosomal_uS4_bac-type"/>
</dbReference>
<dbReference type="InterPro" id="IPR018079">
    <property type="entry name" value="Ribosomal_uS4_CS"/>
</dbReference>
<dbReference type="InterPro" id="IPR001912">
    <property type="entry name" value="Ribosomal_uS4_N"/>
</dbReference>
<dbReference type="InterPro" id="IPR002942">
    <property type="entry name" value="S4_RNA-bd"/>
</dbReference>
<dbReference type="InterPro" id="IPR036986">
    <property type="entry name" value="S4_RNA-bd_sf"/>
</dbReference>
<dbReference type="NCBIfam" id="NF003717">
    <property type="entry name" value="PRK05327.1"/>
    <property type="match status" value="1"/>
</dbReference>
<dbReference type="NCBIfam" id="TIGR01017">
    <property type="entry name" value="rpsD_bact"/>
    <property type="match status" value="1"/>
</dbReference>
<dbReference type="PANTHER" id="PTHR11831">
    <property type="entry name" value="30S 40S RIBOSOMAL PROTEIN"/>
    <property type="match status" value="1"/>
</dbReference>
<dbReference type="PANTHER" id="PTHR11831:SF4">
    <property type="entry name" value="SMALL RIBOSOMAL SUBUNIT PROTEIN US4M"/>
    <property type="match status" value="1"/>
</dbReference>
<dbReference type="Pfam" id="PF00163">
    <property type="entry name" value="Ribosomal_S4"/>
    <property type="match status" value="1"/>
</dbReference>
<dbReference type="Pfam" id="PF01479">
    <property type="entry name" value="S4"/>
    <property type="match status" value="1"/>
</dbReference>
<dbReference type="SMART" id="SM01390">
    <property type="entry name" value="Ribosomal_S4"/>
    <property type="match status" value="1"/>
</dbReference>
<dbReference type="SMART" id="SM00363">
    <property type="entry name" value="S4"/>
    <property type="match status" value="1"/>
</dbReference>
<dbReference type="SUPFAM" id="SSF55174">
    <property type="entry name" value="Alpha-L RNA-binding motif"/>
    <property type="match status" value="1"/>
</dbReference>
<dbReference type="PROSITE" id="PS00632">
    <property type="entry name" value="RIBOSOMAL_S4"/>
    <property type="match status" value="1"/>
</dbReference>
<dbReference type="PROSITE" id="PS50889">
    <property type="entry name" value="S4"/>
    <property type="match status" value="1"/>
</dbReference>
<proteinExistence type="inferred from homology"/>
<reference key="1">
    <citation type="journal article" date="2011" name="Stand. Genomic Sci.">
        <title>Complete genome sequence of the halophilic and highly halotolerant Chromohalobacter salexigens type strain (1H11(T)).</title>
        <authorList>
            <person name="Copeland A."/>
            <person name="O'Connor K."/>
            <person name="Lucas S."/>
            <person name="Lapidus A."/>
            <person name="Berry K.W."/>
            <person name="Detter J.C."/>
            <person name="Del Rio T.G."/>
            <person name="Hammon N."/>
            <person name="Dalin E."/>
            <person name="Tice H."/>
            <person name="Pitluck S."/>
            <person name="Bruce D."/>
            <person name="Goodwin L."/>
            <person name="Han C."/>
            <person name="Tapia R."/>
            <person name="Saunders E."/>
            <person name="Schmutz J."/>
            <person name="Brettin T."/>
            <person name="Larimer F."/>
            <person name="Land M."/>
            <person name="Hauser L."/>
            <person name="Vargas C."/>
            <person name="Nieto J.J."/>
            <person name="Kyrpides N.C."/>
            <person name="Ivanova N."/>
            <person name="Goker M."/>
            <person name="Klenk H.P."/>
            <person name="Csonka L.N."/>
            <person name="Woyke T."/>
        </authorList>
    </citation>
    <scope>NUCLEOTIDE SEQUENCE [LARGE SCALE GENOMIC DNA]</scope>
    <source>
        <strain>ATCC BAA-138 / DSM 3043 / CIP 106854 / NCIMB 13768 / 1H11</strain>
    </source>
</reference>
<feature type="chain" id="PRO_0000293259" description="Small ribosomal subunit protein uS4">
    <location>
        <begin position="1"/>
        <end position="206"/>
    </location>
</feature>
<feature type="domain" description="S4 RNA-binding" evidence="1">
    <location>
        <begin position="96"/>
        <end position="157"/>
    </location>
</feature>
<protein>
    <recommendedName>
        <fullName evidence="1">Small ribosomal subunit protein uS4</fullName>
    </recommendedName>
    <alternativeName>
        <fullName evidence="2">30S ribosomal protein S4</fullName>
    </alternativeName>
</protein>
<keyword id="KW-1185">Reference proteome</keyword>
<keyword id="KW-0687">Ribonucleoprotein</keyword>
<keyword id="KW-0689">Ribosomal protein</keyword>
<keyword id="KW-0694">RNA-binding</keyword>
<keyword id="KW-0699">rRNA-binding</keyword>
<evidence type="ECO:0000255" key="1">
    <source>
        <dbReference type="HAMAP-Rule" id="MF_01306"/>
    </source>
</evidence>
<evidence type="ECO:0000305" key="2"/>
<accession>Q1R0F1</accession>
<gene>
    <name evidence="1" type="primary">rpsD</name>
    <name type="ordered locus">Csal_0445</name>
</gene>
<name>RS4_CHRSD</name>
<organism>
    <name type="scientific">Chromohalobacter salexigens (strain ATCC BAA-138 / DSM 3043 / CIP 106854 / NCIMB 13768 / 1H11)</name>
    <dbReference type="NCBI Taxonomy" id="290398"/>
    <lineage>
        <taxon>Bacteria</taxon>
        <taxon>Pseudomonadati</taxon>
        <taxon>Pseudomonadota</taxon>
        <taxon>Gammaproteobacteria</taxon>
        <taxon>Oceanospirillales</taxon>
        <taxon>Halomonadaceae</taxon>
        <taxon>Chromohalobacter</taxon>
    </lineage>
</organism>